<feature type="chain" id="PRO_1000214611" description="Large ribosomal subunit protein uL22">
    <location>
        <begin position="1"/>
        <end position="110"/>
    </location>
</feature>
<sequence>METIAKHCHARSSAQKVRLVADLIRGKKVSQALEVLTYTNKKAAGLVKKVLESAIANAEHNDGADIDDLKVAKIFVDEGPSMKRIMPRAKGRADRILKRTSHITVVVSDR</sequence>
<protein>
    <recommendedName>
        <fullName evidence="1">Large ribosomal subunit protein uL22</fullName>
    </recommendedName>
    <alternativeName>
        <fullName evidence="2">50S ribosomal protein L22</fullName>
    </alternativeName>
</protein>
<organism>
    <name type="scientific">Pectobacterium carotovorum subsp. carotovorum (strain PC1)</name>
    <dbReference type="NCBI Taxonomy" id="561230"/>
    <lineage>
        <taxon>Bacteria</taxon>
        <taxon>Pseudomonadati</taxon>
        <taxon>Pseudomonadota</taxon>
        <taxon>Gammaproteobacteria</taxon>
        <taxon>Enterobacterales</taxon>
        <taxon>Pectobacteriaceae</taxon>
        <taxon>Pectobacterium</taxon>
    </lineage>
</organism>
<gene>
    <name evidence="1" type="primary">rplV</name>
    <name type="ordered locus">PC1_3817</name>
</gene>
<accession>C6DG69</accession>
<keyword id="KW-0687">Ribonucleoprotein</keyword>
<keyword id="KW-0689">Ribosomal protein</keyword>
<keyword id="KW-0694">RNA-binding</keyword>
<keyword id="KW-0699">rRNA-binding</keyword>
<name>RL22_PECCP</name>
<evidence type="ECO:0000255" key="1">
    <source>
        <dbReference type="HAMAP-Rule" id="MF_01331"/>
    </source>
</evidence>
<evidence type="ECO:0000305" key="2"/>
<reference key="1">
    <citation type="submission" date="2009-07" db="EMBL/GenBank/DDBJ databases">
        <title>Complete sequence of Pectobacterium carotovorum subsp. carotovorum PC1.</title>
        <authorList>
            <consortium name="US DOE Joint Genome Institute"/>
            <person name="Lucas S."/>
            <person name="Copeland A."/>
            <person name="Lapidus A."/>
            <person name="Glavina del Rio T."/>
            <person name="Tice H."/>
            <person name="Bruce D."/>
            <person name="Goodwin L."/>
            <person name="Pitluck S."/>
            <person name="Munk A.C."/>
            <person name="Brettin T."/>
            <person name="Detter J.C."/>
            <person name="Han C."/>
            <person name="Tapia R."/>
            <person name="Larimer F."/>
            <person name="Land M."/>
            <person name="Hauser L."/>
            <person name="Kyrpides N."/>
            <person name="Mikhailova N."/>
            <person name="Balakrishnan V."/>
            <person name="Glasner J."/>
            <person name="Perna N.T."/>
        </authorList>
    </citation>
    <scope>NUCLEOTIDE SEQUENCE [LARGE SCALE GENOMIC DNA]</scope>
    <source>
        <strain>PC1</strain>
    </source>
</reference>
<comment type="function">
    <text evidence="1">This protein binds specifically to 23S rRNA; its binding is stimulated by other ribosomal proteins, e.g. L4, L17, and L20. It is important during the early stages of 50S assembly. It makes multiple contacts with different domains of the 23S rRNA in the assembled 50S subunit and ribosome (By similarity).</text>
</comment>
<comment type="function">
    <text evidence="1">The globular domain of the protein is located near the polypeptide exit tunnel on the outside of the subunit, while an extended beta-hairpin is found that lines the wall of the exit tunnel in the center of the 70S ribosome.</text>
</comment>
<comment type="subunit">
    <text evidence="1">Part of the 50S ribosomal subunit.</text>
</comment>
<comment type="similarity">
    <text evidence="1">Belongs to the universal ribosomal protein uL22 family.</text>
</comment>
<proteinExistence type="inferred from homology"/>
<dbReference type="EMBL" id="CP001657">
    <property type="protein sequence ID" value="ACT14832.1"/>
    <property type="molecule type" value="Genomic_DNA"/>
</dbReference>
<dbReference type="RefSeq" id="WP_005970275.1">
    <property type="nucleotide sequence ID" value="NC_012917.1"/>
</dbReference>
<dbReference type="SMR" id="C6DG69"/>
<dbReference type="STRING" id="561230.PC1_3817"/>
<dbReference type="GeneID" id="93391975"/>
<dbReference type="KEGG" id="pct:PC1_3817"/>
<dbReference type="eggNOG" id="COG0091">
    <property type="taxonomic scope" value="Bacteria"/>
</dbReference>
<dbReference type="HOGENOM" id="CLU_083987_3_3_6"/>
<dbReference type="OrthoDB" id="9805969at2"/>
<dbReference type="Proteomes" id="UP000002736">
    <property type="component" value="Chromosome"/>
</dbReference>
<dbReference type="GO" id="GO:0022625">
    <property type="term" value="C:cytosolic large ribosomal subunit"/>
    <property type="evidence" value="ECO:0007669"/>
    <property type="project" value="TreeGrafter"/>
</dbReference>
<dbReference type="GO" id="GO:0019843">
    <property type="term" value="F:rRNA binding"/>
    <property type="evidence" value="ECO:0007669"/>
    <property type="project" value="UniProtKB-UniRule"/>
</dbReference>
<dbReference type="GO" id="GO:0003735">
    <property type="term" value="F:structural constituent of ribosome"/>
    <property type="evidence" value="ECO:0007669"/>
    <property type="project" value="InterPro"/>
</dbReference>
<dbReference type="GO" id="GO:0006412">
    <property type="term" value="P:translation"/>
    <property type="evidence" value="ECO:0007669"/>
    <property type="project" value="UniProtKB-UniRule"/>
</dbReference>
<dbReference type="CDD" id="cd00336">
    <property type="entry name" value="Ribosomal_L22"/>
    <property type="match status" value="1"/>
</dbReference>
<dbReference type="FunFam" id="3.90.470.10:FF:000001">
    <property type="entry name" value="50S ribosomal protein L22"/>
    <property type="match status" value="1"/>
</dbReference>
<dbReference type="Gene3D" id="3.90.470.10">
    <property type="entry name" value="Ribosomal protein L22/L17"/>
    <property type="match status" value="1"/>
</dbReference>
<dbReference type="HAMAP" id="MF_01331_B">
    <property type="entry name" value="Ribosomal_uL22_B"/>
    <property type="match status" value="1"/>
</dbReference>
<dbReference type="InterPro" id="IPR001063">
    <property type="entry name" value="Ribosomal_uL22"/>
</dbReference>
<dbReference type="InterPro" id="IPR005727">
    <property type="entry name" value="Ribosomal_uL22_bac/chlpt-type"/>
</dbReference>
<dbReference type="InterPro" id="IPR047867">
    <property type="entry name" value="Ribosomal_uL22_bac/org-type"/>
</dbReference>
<dbReference type="InterPro" id="IPR018260">
    <property type="entry name" value="Ribosomal_uL22_CS"/>
</dbReference>
<dbReference type="InterPro" id="IPR036394">
    <property type="entry name" value="Ribosomal_uL22_sf"/>
</dbReference>
<dbReference type="NCBIfam" id="TIGR01044">
    <property type="entry name" value="rplV_bact"/>
    <property type="match status" value="1"/>
</dbReference>
<dbReference type="PANTHER" id="PTHR13501">
    <property type="entry name" value="CHLOROPLAST 50S RIBOSOMAL PROTEIN L22-RELATED"/>
    <property type="match status" value="1"/>
</dbReference>
<dbReference type="PANTHER" id="PTHR13501:SF8">
    <property type="entry name" value="LARGE RIBOSOMAL SUBUNIT PROTEIN UL22M"/>
    <property type="match status" value="1"/>
</dbReference>
<dbReference type="Pfam" id="PF00237">
    <property type="entry name" value="Ribosomal_L22"/>
    <property type="match status" value="1"/>
</dbReference>
<dbReference type="SUPFAM" id="SSF54843">
    <property type="entry name" value="Ribosomal protein L22"/>
    <property type="match status" value="1"/>
</dbReference>
<dbReference type="PROSITE" id="PS00464">
    <property type="entry name" value="RIBOSOMAL_L22"/>
    <property type="match status" value="1"/>
</dbReference>